<protein>
    <recommendedName>
        <fullName>Deoxyribonuclease-2-alpha</fullName>
        <ecNumber>3.1.22.1</ecNumber>
    </recommendedName>
    <alternativeName>
        <fullName>Acid DNase</fullName>
    </alternativeName>
    <alternativeName>
        <fullName>Deoxyribonuclease II alpha</fullName>
        <shortName>DNase II alpha</shortName>
    </alternativeName>
    <alternativeName>
        <fullName>Lysosomal DNase II</fullName>
    </alternativeName>
</protein>
<sequence>MATLSPLLLAALLWVPVGTLTCYGDSGQPVDWFVVYKLPAHSSPGDVAQSGLRYKYLDEESGGWRDGAGSINSSTGALGRSLLPLYRNTSQLAFLLYNDQPPKYRGSQHSSNRGHTKGVLLLDQEGGFWLIHSVPNFPPPSSSAAYSWPPSARTYGQTLICVSFPLTQFLNISRQLTYTYPMVYDYKLEGDFARKFPYLEEVVKGHHVLQEPWNSSVTLTSKAGASFQSFAKCGNFGDDLYSGWLAEALGSNLQVQFWQRSAGILPSNCSGVQHVLDVTQIAFPGPAGPNFNATEDHSKWCVAPERPWTCVGDMNRNKREEHRGGGTLCAQLPALWKAFKPLVKAWEPCEKENRAFSPRSPAKD</sequence>
<accession>O62855</accession>
<keyword id="KW-0053">Apoptosis</keyword>
<keyword id="KW-0217">Developmental protein</keyword>
<keyword id="KW-0903">Direct protein sequencing</keyword>
<keyword id="KW-1015">Disulfide bond</keyword>
<keyword id="KW-0255">Endonuclease</keyword>
<keyword id="KW-0325">Glycoprotein</keyword>
<keyword id="KW-0378">Hydrolase</keyword>
<keyword id="KW-0458">Lysosome</keyword>
<keyword id="KW-0540">Nuclease</keyword>
<keyword id="KW-1185">Reference proteome</keyword>
<keyword id="KW-0732">Signal</keyword>
<comment type="function">
    <text evidence="2">Hydrolyzes DNA under acidic conditions with a preference for double-stranded DNA. Plays a major role in the clearance of nucleic acids generated through apoptosis, hence preventing autoinflammation. Necessary for proper fetal development and for definitive erythropoiesis in fetal liver and bone marrow, where it degrades nuclear DNA expelled from erythroid precursor cells.</text>
</comment>
<comment type="catalytic activity">
    <reaction evidence="2">
        <text>Endonucleolytic cleavage to nucleoside 3'-phosphates and 3'-phosphooligonucleotide end-products.</text>
        <dbReference type="EC" id="3.1.22.1"/>
    </reaction>
</comment>
<comment type="subcellular location">
    <subcellularLocation>
        <location>Lysosome</location>
    </subcellularLocation>
</comment>
<comment type="similarity">
    <text evidence="4">Belongs to the DNase II family.</text>
</comment>
<gene>
    <name type="primary">DNASE2</name>
    <name type="synonym">DNASE2A</name>
    <name type="synonym">DNL2</name>
</gene>
<name>DNS2A_PIG</name>
<feature type="signal peptide" evidence="3">
    <location>
        <begin position="1"/>
        <end position="21"/>
    </location>
</feature>
<feature type="chain" id="PRO_0000007293" description="Deoxyribonuclease-2-alpha">
    <location>
        <begin position="22"/>
        <end position="364"/>
    </location>
</feature>
<feature type="active site" evidence="1">
    <location>
        <position position="297"/>
    </location>
</feature>
<feature type="glycosylation site" description="N-linked (GlcNAc...) asparagine" evidence="3">
    <location>
        <position position="72"/>
    </location>
</feature>
<feature type="glycosylation site" description="N-linked (GlcNAc...) asparagine" evidence="1">
    <location>
        <position position="88"/>
    </location>
</feature>
<feature type="glycosylation site" description="N-linked (GlcNAc...) asparagine" evidence="3">
    <location>
        <position position="171"/>
    </location>
</feature>
<feature type="glycosylation site" description="N-linked (GlcNAc...) asparagine" evidence="1">
    <location>
        <position position="214"/>
    </location>
</feature>
<feature type="glycosylation site" description="N-linked (GlcNAc...) asparagine" evidence="1">
    <location>
        <position position="268"/>
    </location>
</feature>
<feature type="glycosylation site" description="N-linked (GlcNAc...) asparagine" evidence="1">
    <location>
        <position position="292"/>
    </location>
</feature>
<feature type="disulfide bond" evidence="3">
    <location>
        <begin position="22"/>
        <end position="161"/>
    </location>
</feature>
<feature type="disulfide bond" evidence="3">
    <location>
        <begin position="269"/>
        <end position="349"/>
    </location>
</feature>
<feature type="disulfide bond" evidence="3">
    <location>
        <begin position="310"/>
        <end position="329"/>
    </location>
</feature>
<reference key="1">
    <citation type="submission" date="1998-01" db="EMBL/GenBank/DDBJ databases">
        <authorList>
            <person name="Wang C.C."/>
            <person name="Lu S.C."/>
            <person name="Chen H.L."/>
            <person name="Liao T.H."/>
        </authorList>
    </citation>
    <scope>NUCLEOTIDE SEQUENCE [MRNA]</scope>
    <source>
        <tissue>Spleen</tissue>
    </source>
</reference>
<reference key="2">
    <citation type="journal article" date="1998" name="Biochem. Biophys. Res. Commun.">
        <title>Cloning of cDNAs encoding porcine and human DNase II.</title>
        <authorList>
            <person name="Shiokawa D."/>
            <person name="Tanuma S."/>
        </authorList>
    </citation>
    <scope>NUCLEOTIDE SEQUENCE [MRNA]</scope>
    <scope>PARTIAL PROTEIN SEQUENCE</scope>
    <source>
        <tissue>Liver</tissue>
    </source>
</reference>
<dbReference type="EC" id="3.1.22.1"/>
<dbReference type="EMBL" id="AJ001387">
    <property type="protein sequence ID" value="CAA04717.1"/>
    <property type="molecule type" value="mRNA"/>
</dbReference>
<dbReference type="EMBL" id="AF060221">
    <property type="protein sequence ID" value="AAC39263.1"/>
    <property type="molecule type" value="mRNA"/>
</dbReference>
<dbReference type="PIR" id="JE0205">
    <property type="entry name" value="JE0205"/>
</dbReference>
<dbReference type="RefSeq" id="NP_999361.1">
    <property type="nucleotide sequence ID" value="NM_214196.1"/>
</dbReference>
<dbReference type="SMR" id="O62855"/>
<dbReference type="FunCoup" id="O62855">
    <property type="interactions" value="261"/>
</dbReference>
<dbReference type="STRING" id="9823.ENSSSCP00000014601"/>
<dbReference type="BindingDB" id="O62855"/>
<dbReference type="ChEMBL" id="CHEMBL5894"/>
<dbReference type="GlyCosmos" id="O62855">
    <property type="glycosylation" value="6 sites, No reported glycans"/>
</dbReference>
<dbReference type="GlyGen" id="O62855">
    <property type="glycosylation" value="6 sites"/>
</dbReference>
<dbReference type="PaxDb" id="9823-ENSSSCP00000014601"/>
<dbReference type="PeptideAtlas" id="O62855"/>
<dbReference type="Ensembl" id="ENSSSCT00025087022.1">
    <property type="protein sequence ID" value="ENSSSCP00025037897.1"/>
    <property type="gene ID" value="ENSSSCG00025063525.1"/>
</dbReference>
<dbReference type="Ensembl" id="ENSSSCT00040017694.1">
    <property type="protein sequence ID" value="ENSSSCP00040007244.1"/>
    <property type="gene ID" value="ENSSSCG00040013312.1"/>
</dbReference>
<dbReference type="Ensembl" id="ENSSSCT00055047070.1">
    <property type="protein sequence ID" value="ENSSSCP00055037548.1"/>
    <property type="gene ID" value="ENSSSCG00055023839.1"/>
</dbReference>
<dbReference type="Ensembl" id="ENSSSCT00065030500.1">
    <property type="protein sequence ID" value="ENSSSCP00065012469.1"/>
    <property type="gene ID" value="ENSSSCG00065022917.1"/>
</dbReference>
<dbReference type="Ensembl" id="ENSSSCT00065030506.1">
    <property type="protein sequence ID" value="ENSSSCP00065012470.1"/>
    <property type="gene ID" value="ENSSSCG00065022917.1"/>
</dbReference>
<dbReference type="Ensembl" id="ENSSSCT00105078860">
    <property type="protein sequence ID" value="ENSSSCP00105055904"/>
    <property type="gene ID" value="ENSSSCG00105041326"/>
</dbReference>
<dbReference type="Ensembl" id="ENSSSCT00110036440">
    <property type="protein sequence ID" value="ENSSSCP00110024916"/>
    <property type="gene ID" value="ENSSSCG00110019059"/>
</dbReference>
<dbReference type="Ensembl" id="ENSSSCT00130076088">
    <property type="protein sequence ID" value="ENSSSCP00130054680"/>
    <property type="gene ID" value="ENSSSCG00130039097"/>
</dbReference>
<dbReference type="GeneID" id="397398"/>
<dbReference type="KEGG" id="ssc:397398"/>
<dbReference type="CTD" id="1777"/>
<dbReference type="eggNOG" id="KOG3825">
    <property type="taxonomic scope" value="Eukaryota"/>
</dbReference>
<dbReference type="InParanoid" id="O62855"/>
<dbReference type="OrthoDB" id="10261598at2759"/>
<dbReference type="BRENDA" id="3.1.22.1">
    <property type="organism ID" value="6170"/>
</dbReference>
<dbReference type="Reactome" id="R-SSC-432720">
    <property type="pathway name" value="Lysosome Vesicle Biogenesis"/>
</dbReference>
<dbReference type="PRO" id="PR:O62855"/>
<dbReference type="Proteomes" id="UP000008227">
    <property type="component" value="Unplaced"/>
</dbReference>
<dbReference type="Proteomes" id="UP000314985">
    <property type="component" value="Unplaced"/>
</dbReference>
<dbReference type="Proteomes" id="UP000694570">
    <property type="component" value="Unplaced"/>
</dbReference>
<dbReference type="Proteomes" id="UP000694571">
    <property type="component" value="Unplaced"/>
</dbReference>
<dbReference type="Proteomes" id="UP000694720">
    <property type="component" value="Unplaced"/>
</dbReference>
<dbReference type="Proteomes" id="UP000694722">
    <property type="component" value="Unplaced"/>
</dbReference>
<dbReference type="Proteomes" id="UP000694723">
    <property type="component" value="Unplaced"/>
</dbReference>
<dbReference type="Proteomes" id="UP000694724">
    <property type="component" value="Unplaced"/>
</dbReference>
<dbReference type="Proteomes" id="UP000694725">
    <property type="component" value="Unplaced"/>
</dbReference>
<dbReference type="Proteomes" id="UP000694726">
    <property type="component" value="Unplaced"/>
</dbReference>
<dbReference type="Proteomes" id="UP000694727">
    <property type="component" value="Unplaced"/>
</dbReference>
<dbReference type="Proteomes" id="UP000694728">
    <property type="component" value="Unplaced"/>
</dbReference>
<dbReference type="GO" id="GO:0005764">
    <property type="term" value="C:lysosome"/>
    <property type="evidence" value="ECO:0007669"/>
    <property type="project" value="UniProtKB-SubCell"/>
</dbReference>
<dbReference type="GO" id="GO:0004531">
    <property type="term" value="F:deoxyribonuclease II activity"/>
    <property type="evidence" value="ECO:0000318"/>
    <property type="project" value="GO_Central"/>
</dbReference>
<dbReference type="GO" id="GO:0006309">
    <property type="term" value="P:apoptotic DNA fragmentation"/>
    <property type="evidence" value="ECO:0000318"/>
    <property type="project" value="GO_Central"/>
</dbReference>
<dbReference type="InterPro" id="IPR004947">
    <property type="entry name" value="DNase_II"/>
</dbReference>
<dbReference type="PANTHER" id="PTHR10858">
    <property type="entry name" value="DEOXYRIBONUCLEASE II"/>
    <property type="match status" value="1"/>
</dbReference>
<dbReference type="PANTHER" id="PTHR10858:SF9">
    <property type="entry name" value="DEOXYRIBONUCLEASE-2-ALPHA"/>
    <property type="match status" value="1"/>
</dbReference>
<dbReference type="Pfam" id="PF03265">
    <property type="entry name" value="DNase_II"/>
    <property type="match status" value="1"/>
</dbReference>
<proteinExistence type="evidence at protein level"/>
<evidence type="ECO:0000250" key="1"/>
<evidence type="ECO:0000250" key="2">
    <source>
        <dbReference type="UniProtKB" id="O00115"/>
    </source>
</evidence>
<evidence type="ECO:0000255" key="3"/>
<evidence type="ECO:0000305" key="4"/>
<organism>
    <name type="scientific">Sus scrofa</name>
    <name type="common">Pig</name>
    <dbReference type="NCBI Taxonomy" id="9823"/>
    <lineage>
        <taxon>Eukaryota</taxon>
        <taxon>Metazoa</taxon>
        <taxon>Chordata</taxon>
        <taxon>Craniata</taxon>
        <taxon>Vertebrata</taxon>
        <taxon>Euteleostomi</taxon>
        <taxon>Mammalia</taxon>
        <taxon>Eutheria</taxon>
        <taxon>Laurasiatheria</taxon>
        <taxon>Artiodactyla</taxon>
        <taxon>Suina</taxon>
        <taxon>Suidae</taxon>
        <taxon>Sus</taxon>
    </lineage>
</organism>